<reference key="1">
    <citation type="journal article" date="2004" name="Nat. Med.">
        <title>Identification of a new human coronavirus.</title>
        <authorList>
            <person name="Van Der Hoek L."/>
            <person name="Pyrc K."/>
            <person name="Jebbink M.F."/>
            <person name="Vermeulen-Oost W."/>
            <person name="Berkhout R.J."/>
            <person name="Wolthers K.C."/>
            <person name="Wertheim-Van Dillen P.M."/>
            <person name="Kaandorp J."/>
            <person name="Spaargaren J."/>
            <person name="Berkhout B."/>
        </authorList>
    </citation>
    <scope>NUCLEOTIDE SEQUENCE [GENOMIC RNA]</scope>
    <source>
        <strain>Isolate Amsterdam I</strain>
    </source>
</reference>
<reference key="2">
    <citation type="journal article" date="2006" name="J. Mol. Biol.">
        <title>Mosaic structure of human coronavirus NL63, one thousand years of evolution.</title>
        <authorList>
            <person name="Pyrc K."/>
            <person name="Dijkman R."/>
            <person name="Deng L."/>
            <person name="Jebbink M.F."/>
            <person name="Ross H.A."/>
            <person name="Berkhout B."/>
            <person name="van der Hoek L."/>
        </authorList>
    </citation>
    <scope>NUCLEOTIDE SEQUENCE [GENOMIC RNA]</scope>
    <source>
        <strain>Isolate Amsterdam 057</strain>
        <strain>Isolate Amsterdam 496</strain>
    </source>
</reference>
<reference key="3">
    <citation type="submission" date="2006-06" db="EMBL/GenBank/DDBJ databases">
        <title>Sequence analysis of envelope protein gene from Human coronavirus NL63 identified from specimen collected from a child with acute respiratory infection in Beijing, China.</title>
        <authorList>
            <person name="Xing J."/>
            <person name="Zhu R."/>
            <person name="Qian Y."/>
            <person name="Deng J."/>
            <person name="Wang F."/>
            <person name="Zhao L."/>
            <person name="Sun Y."/>
            <person name="Liao B."/>
        </authorList>
    </citation>
    <scope>NUCLEOTIDE SEQUENCE [GENOMIC RNA]</scope>
    <source>
        <strain>Isolate BJ8081</strain>
    </source>
</reference>
<organismHost>
    <name type="scientific">Homo sapiens</name>
    <name type="common">Human</name>
    <dbReference type="NCBI Taxonomy" id="9606"/>
</organismHost>
<organism>
    <name type="scientific">Human coronavirus NL63</name>
    <name type="common">HCoV-NL63</name>
    <dbReference type="NCBI Taxonomy" id="277944"/>
    <lineage>
        <taxon>Viruses</taxon>
        <taxon>Riboviria</taxon>
        <taxon>Orthornavirae</taxon>
        <taxon>Pisuviricota</taxon>
        <taxon>Pisoniviricetes</taxon>
        <taxon>Nidovirales</taxon>
        <taxon>Cornidovirineae</taxon>
        <taxon>Coronaviridae</taxon>
        <taxon>Orthocoronavirinae</taxon>
        <taxon>Alphacoronavirus</taxon>
        <taxon>Setracovirus</taxon>
    </lineage>
</organism>
<comment type="function">
    <text evidence="1">Plays a central role in virus morphogenesis and assembly. Acts as a viroporin and self-assembles in host membranes forming pentameric protein-lipid pores that allow ion transport. Also plays a role in the induction of apoptosis.</text>
</comment>
<comment type="subunit">
    <text evidence="1">Homopentamer. Interacts with membrane protein M in the budding compartment of the host cell, which is located between endoplasmic reticulum and the Golgi complex. Interacts with Nucleoprotein.</text>
</comment>
<comment type="subcellular location">
    <subcellularLocation>
        <location evidence="1">Host Golgi apparatus membrane</location>
        <topology evidence="1">Single-pass type III membrane protein</topology>
    </subcellularLocation>
    <text evidence="1">The cytoplasmic tail functions as a Golgi complex-targeting signal.</text>
</comment>
<comment type="similarity">
    <text evidence="1">Belongs to the alphacoronaviruses E protein family.</text>
</comment>
<evidence type="ECO:0000255" key="1">
    <source>
        <dbReference type="HAMAP-Rule" id="MF_04205"/>
    </source>
</evidence>
<feature type="chain" id="PRO_0000283974" description="Envelope small membrane protein">
    <location>
        <begin position="1"/>
        <end position="77"/>
    </location>
</feature>
<feature type="topological domain" description="Virion surface" evidence="1">
    <location>
        <begin position="1"/>
        <end position="15"/>
    </location>
</feature>
<feature type="transmembrane region" description="Helical" evidence="1">
    <location>
        <begin position="16"/>
        <end position="36"/>
    </location>
</feature>
<feature type="topological domain" description="Intravirion" evidence="1">
    <location>
        <begin position="37"/>
        <end position="77"/>
    </location>
</feature>
<proteinExistence type="inferred from homology"/>
<accession>Q6Q1S0</accession>
<gene>
    <name evidence="1" type="primary">E</name>
    <name type="synonym">sM</name>
    <name type="ORF">4</name>
</gene>
<name>VEMP_CVHNL</name>
<sequence>MFLRLIDDNGIVLNSILWLLVMIFFFVLAMTFIKLIQLCFTCHYFFSRTLYQPVYKIFLAYQDYMQIAPVPAEVLNV</sequence>
<protein>
    <recommendedName>
        <fullName evidence="1">Envelope small membrane protein</fullName>
        <shortName evidence="1">E protein</shortName>
        <shortName evidence="1">sM protein</shortName>
    </recommendedName>
</protein>
<dbReference type="EMBL" id="AY567487">
    <property type="protein sequence ID" value="AAS58179.1"/>
    <property type="molecule type" value="Genomic_RNA"/>
</dbReference>
<dbReference type="EMBL" id="DQ445911">
    <property type="protein sequence ID" value="ABE97139.1"/>
    <property type="molecule type" value="Genomic_RNA"/>
</dbReference>
<dbReference type="EMBL" id="DQ445912">
    <property type="protein sequence ID" value="ABE97132.1"/>
    <property type="molecule type" value="Genomic_RNA"/>
</dbReference>
<dbReference type="EMBL" id="DQ834909">
    <property type="protein sequence ID" value="ABI24281.1"/>
    <property type="molecule type" value="Genomic_RNA"/>
</dbReference>
<dbReference type="RefSeq" id="YP_003769.1">
    <property type="nucleotide sequence ID" value="NC_005831.2"/>
</dbReference>
<dbReference type="DNASU" id="2943502"/>
<dbReference type="GeneID" id="2943502"/>
<dbReference type="KEGG" id="vg:2943502"/>
<dbReference type="OrthoDB" id="27815at10239"/>
<dbReference type="Proteomes" id="UP000008573">
    <property type="component" value="Genome"/>
</dbReference>
<dbReference type="Proteomes" id="UP000115484">
    <property type="component" value="Genome"/>
</dbReference>
<dbReference type="Proteomes" id="UP000138462">
    <property type="component" value="Genome"/>
</dbReference>
<dbReference type="GO" id="GO:0044178">
    <property type="term" value="C:host cell Golgi membrane"/>
    <property type="evidence" value="ECO:0007669"/>
    <property type="project" value="UniProtKB-SubCell"/>
</dbReference>
<dbReference type="GO" id="GO:0016020">
    <property type="term" value="C:membrane"/>
    <property type="evidence" value="ECO:0007669"/>
    <property type="project" value="UniProtKB-UniRule"/>
</dbReference>
<dbReference type="GO" id="GO:0140975">
    <property type="term" value="P:disruption of cellular anatomical structure in another organism"/>
    <property type="evidence" value="ECO:0007669"/>
    <property type="project" value="UniProtKB-UniRule"/>
</dbReference>
<dbReference type="GO" id="GO:0046760">
    <property type="term" value="P:viral budding from Golgi membrane"/>
    <property type="evidence" value="ECO:0007669"/>
    <property type="project" value="UniProtKB-UniRule"/>
</dbReference>
<dbReference type="HAMAP" id="MF_04205">
    <property type="entry name" value="ALPHA_CORONA_E"/>
    <property type="match status" value="1"/>
</dbReference>
<dbReference type="InterPro" id="IPR043507">
    <property type="entry name" value="E_protein_aCoV"/>
</dbReference>
<dbReference type="InterPro" id="IPR003873">
    <property type="entry name" value="E_protein_CoV"/>
</dbReference>
<dbReference type="Pfam" id="PF02723">
    <property type="entry name" value="CoV_E"/>
    <property type="match status" value="1"/>
</dbReference>
<dbReference type="PROSITE" id="PS51926">
    <property type="entry name" value="COV_E"/>
    <property type="match status" value="1"/>
</dbReference>
<keyword id="KW-0053">Apoptosis</keyword>
<keyword id="KW-1040">Host Golgi apparatus</keyword>
<keyword id="KW-1043">Host membrane</keyword>
<keyword id="KW-0472">Membrane</keyword>
<keyword id="KW-1185">Reference proteome</keyword>
<keyword id="KW-0812">Transmembrane</keyword>
<keyword id="KW-1133">Transmembrane helix</keyword>